<comment type="subcellular location">
    <subcellularLocation>
        <location evidence="3">Nucleus</location>
    </subcellularLocation>
</comment>
<accession>Q9Y815</accession>
<dbReference type="EMBL" id="CU329671">
    <property type="protein sequence ID" value="CAB50977.1"/>
    <property type="molecule type" value="Genomic_DNA"/>
</dbReference>
<dbReference type="PIR" id="T39291">
    <property type="entry name" value="T39291"/>
</dbReference>
<dbReference type="RefSeq" id="NP_596470.1">
    <property type="nucleotide sequence ID" value="NM_001022389.2"/>
</dbReference>
<dbReference type="BioGRID" id="276162">
    <property type="interactions" value="143"/>
</dbReference>
<dbReference type="FunCoup" id="Q9Y815">
    <property type="interactions" value="2"/>
</dbReference>
<dbReference type="STRING" id="284812.Q9Y815"/>
<dbReference type="iPTMnet" id="Q9Y815"/>
<dbReference type="SwissPalm" id="Q9Y815"/>
<dbReference type="PaxDb" id="4896-SPBC1105.14.1"/>
<dbReference type="EnsemblFungi" id="SPBC1105.14.1">
    <property type="protein sequence ID" value="SPBC1105.14.1:pep"/>
    <property type="gene ID" value="SPBC1105.14"/>
</dbReference>
<dbReference type="PomBase" id="SPBC1105.14">
    <property type="gene designation" value="rsv2"/>
</dbReference>
<dbReference type="VEuPathDB" id="FungiDB:SPBC1105.14"/>
<dbReference type="eggNOG" id="ENOG502RBAK">
    <property type="taxonomic scope" value="Eukaryota"/>
</dbReference>
<dbReference type="HOGENOM" id="CLU_481598_0_0_1"/>
<dbReference type="InParanoid" id="Q9Y815"/>
<dbReference type="OMA" id="DTIHAKT"/>
<dbReference type="PRO" id="PR:Q9Y815"/>
<dbReference type="Proteomes" id="UP000002485">
    <property type="component" value="Chromosome II"/>
</dbReference>
<dbReference type="GO" id="GO:0005634">
    <property type="term" value="C:nucleus"/>
    <property type="evidence" value="ECO:0007005"/>
    <property type="project" value="PomBase"/>
</dbReference>
<dbReference type="GO" id="GO:0000981">
    <property type="term" value="F:DNA-binding transcription factor activity, RNA polymerase II-specific"/>
    <property type="evidence" value="ECO:0000315"/>
    <property type="project" value="PomBase"/>
</dbReference>
<dbReference type="GO" id="GO:0000978">
    <property type="term" value="F:RNA polymerase II cis-regulatory region sequence-specific DNA binding"/>
    <property type="evidence" value="ECO:0000269"/>
    <property type="project" value="PomBase"/>
</dbReference>
<dbReference type="GO" id="GO:0008270">
    <property type="term" value="F:zinc ion binding"/>
    <property type="evidence" value="ECO:0007669"/>
    <property type="project" value="UniProtKB-KW"/>
</dbReference>
<dbReference type="GO" id="GO:0010637">
    <property type="term" value="P:negative regulation of mitochondrial fusion"/>
    <property type="evidence" value="ECO:0000315"/>
    <property type="project" value="PomBase"/>
</dbReference>
<dbReference type="GO" id="GO:0006357">
    <property type="term" value="P:regulation of transcription by RNA polymerase II"/>
    <property type="evidence" value="ECO:0000315"/>
    <property type="project" value="PomBase"/>
</dbReference>
<dbReference type="Gene3D" id="3.30.160.60">
    <property type="entry name" value="Classic Zinc Finger"/>
    <property type="match status" value="1"/>
</dbReference>
<dbReference type="InterPro" id="IPR051061">
    <property type="entry name" value="Zinc_finger_trans_reg"/>
</dbReference>
<dbReference type="InterPro" id="IPR036236">
    <property type="entry name" value="Znf_C2H2_sf"/>
</dbReference>
<dbReference type="InterPro" id="IPR013087">
    <property type="entry name" value="Znf_C2H2_type"/>
</dbReference>
<dbReference type="PANTHER" id="PTHR46179:SF19">
    <property type="entry name" value="C2H2 FINGER DOMAIN TRANSCRIPTION FACTOR (EUROFUNG)-RELATED"/>
    <property type="match status" value="1"/>
</dbReference>
<dbReference type="PANTHER" id="PTHR46179">
    <property type="entry name" value="ZINC FINGER PROTEIN"/>
    <property type="match status" value="1"/>
</dbReference>
<dbReference type="SMART" id="SM00355">
    <property type="entry name" value="ZnF_C2H2"/>
    <property type="match status" value="2"/>
</dbReference>
<dbReference type="SUPFAM" id="SSF57667">
    <property type="entry name" value="beta-beta-alpha zinc fingers"/>
    <property type="match status" value="1"/>
</dbReference>
<dbReference type="PROSITE" id="PS50157">
    <property type="entry name" value="ZINC_FINGER_C2H2_2"/>
    <property type="match status" value="1"/>
</dbReference>
<name>RSV2_SCHPO</name>
<protein>
    <recommendedName>
        <fullName>Zinc finger protein rsv2</fullName>
    </recommendedName>
    <alternativeName>
        <fullName>Required for stationary phase viability protein 2</fullName>
    </alternativeName>
</protein>
<keyword id="KW-0479">Metal-binding</keyword>
<keyword id="KW-0539">Nucleus</keyword>
<keyword id="KW-1185">Reference proteome</keyword>
<keyword id="KW-0677">Repeat</keyword>
<keyword id="KW-0862">Zinc</keyword>
<keyword id="KW-0863">Zinc-finger</keyword>
<gene>
    <name type="primary">rsv2</name>
    <name type="ORF">SPBC1105.14</name>
</gene>
<feature type="chain" id="PRO_0000310841" description="Zinc finger protein rsv2">
    <location>
        <begin position="1"/>
        <end position="637"/>
    </location>
</feature>
<feature type="zinc finger region" description="C2H2-type 1" evidence="1">
    <location>
        <begin position="572"/>
        <end position="603"/>
    </location>
</feature>
<feature type="zinc finger region" description="C2H2-type 2; degenerate" evidence="1">
    <location>
        <begin position="610"/>
        <end position="635"/>
    </location>
</feature>
<feature type="region of interest" description="Disordered" evidence="2">
    <location>
        <begin position="1"/>
        <end position="41"/>
    </location>
</feature>
<feature type="region of interest" description="Disordered" evidence="2">
    <location>
        <begin position="145"/>
        <end position="164"/>
    </location>
</feature>
<feature type="region of interest" description="Disordered" evidence="2">
    <location>
        <begin position="169"/>
        <end position="207"/>
    </location>
</feature>
<feature type="region of interest" description="Disordered" evidence="2">
    <location>
        <begin position="221"/>
        <end position="363"/>
    </location>
</feature>
<feature type="region of interest" description="Disordered" evidence="2">
    <location>
        <begin position="404"/>
        <end position="427"/>
    </location>
</feature>
<feature type="region of interest" description="Disordered" evidence="2">
    <location>
        <begin position="440"/>
        <end position="558"/>
    </location>
</feature>
<feature type="compositionally biased region" description="Low complexity" evidence="2">
    <location>
        <begin position="172"/>
        <end position="189"/>
    </location>
</feature>
<feature type="compositionally biased region" description="Polar residues" evidence="2">
    <location>
        <begin position="196"/>
        <end position="207"/>
    </location>
</feature>
<feature type="compositionally biased region" description="Basic and acidic residues" evidence="2">
    <location>
        <begin position="279"/>
        <end position="296"/>
    </location>
</feature>
<feature type="compositionally biased region" description="Polar residues" evidence="2">
    <location>
        <begin position="298"/>
        <end position="344"/>
    </location>
</feature>
<feature type="compositionally biased region" description="Basic and acidic residues" evidence="2">
    <location>
        <begin position="345"/>
        <end position="355"/>
    </location>
</feature>
<feature type="compositionally biased region" description="Basic and acidic residues" evidence="2">
    <location>
        <begin position="404"/>
        <end position="413"/>
    </location>
</feature>
<feature type="compositionally biased region" description="Low complexity" evidence="2">
    <location>
        <begin position="455"/>
        <end position="471"/>
    </location>
</feature>
<feature type="compositionally biased region" description="Polar residues" evidence="2">
    <location>
        <begin position="472"/>
        <end position="498"/>
    </location>
</feature>
<feature type="compositionally biased region" description="Polar residues" evidence="2">
    <location>
        <begin position="508"/>
        <end position="527"/>
    </location>
</feature>
<feature type="compositionally biased region" description="Low complexity" evidence="2">
    <location>
        <begin position="544"/>
        <end position="554"/>
    </location>
</feature>
<proteinExistence type="predicted"/>
<reference key="1">
    <citation type="journal article" date="2002" name="Nature">
        <title>The genome sequence of Schizosaccharomyces pombe.</title>
        <authorList>
            <person name="Wood V."/>
            <person name="Gwilliam R."/>
            <person name="Rajandream M.A."/>
            <person name="Lyne M.H."/>
            <person name="Lyne R."/>
            <person name="Stewart A."/>
            <person name="Sgouros J.G."/>
            <person name="Peat N."/>
            <person name="Hayles J."/>
            <person name="Baker S.G."/>
            <person name="Basham D."/>
            <person name="Bowman S."/>
            <person name="Brooks K."/>
            <person name="Brown D."/>
            <person name="Brown S."/>
            <person name="Chillingworth T."/>
            <person name="Churcher C.M."/>
            <person name="Collins M."/>
            <person name="Connor R."/>
            <person name="Cronin A."/>
            <person name="Davis P."/>
            <person name="Feltwell T."/>
            <person name="Fraser A."/>
            <person name="Gentles S."/>
            <person name="Goble A."/>
            <person name="Hamlin N."/>
            <person name="Harris D.E."/>
            <person name="Hidalgo J."/>
            <person name="Hodgson G."/>
            <person name="Holroyd S."/>
            <person name="Hornsby T."/>
            <person name="Howarth S."/>
            <person name="Huckle E.J."/>
            <person name="Hunt S."/>
            <person name="Jagels K."/>
            <person name="James K.D."/>
            <person name="Jones L."/>
            <person name="Jones M."/>
            <person name="Leather S."/>
            <person name="McDonald S."/>
            <person name="McLean J."/>
            <person name="Mooney P."/>
            <person name="Moule S."/>
            <person name="Mungall K.L."/>
            <person name="Murphy L.D."/>
            <person name="Niblett D."/>
            <person name="Odell C."/>
            <person name="Oliver K."/>
            <person name="O'Neil S."/>
            <person name="Pearson D."/>
            <person name="Quail M.A."/>
            <person name="Rabbinowitsch E."/>
            <person name="Rutherford K.M."/>
            <person name="Rutter S."/>
            <person name="Saunders D."/>
            <person name="Seeger K."/>
            <person name="Sharp S."/>
            <person name="Skelton J."/>
            <person name="Simmonds M.N."/>
            <person name="Squares R."/>
            <person name="Squares S."/>
            <person name="Stevens K."/>
            <person name="Taylor K."/>
            <person name="Taylor R.G."/>
            <person name="Tivey A."/>
            <person name="Walsh S.V."/>
            <person name="Warren T."/>
            <person name="Whitehead S."/>
            <person name="Woodward J.R."/>
            <person name="Volckaert G."/>
            <person name="Aert R."/>
            <person name="Robben J."/>
            <person name="Grymonprez B."/>
            <person name="Weltjens I."/>
            <person name="Vanstreels E."/>
            <person name="Rieger M."/>
            <person name="Schaefer M."/>
            <person name="Mueller-Auer S."/>
            <person name="Gabel C."/>
            <person name="Fuchs M."/>
            <person name="Duesterhoeft A."/>
            <person name="Fritzc C."/>
            <person name="Holzer E."/>
            <person name="Moestl D."/>
            <person name="Hilbert H."/>
            <person name="Borzym K."/>
            <person name="Langer I."/>
            <person name="Beck A."/>
            <person name="Lehrach H."/>
            <person name="Reinhardt R."/>
            <person name="Pohl T.M."/>
            <person name="Eger P."/>
            <person name="Zimmermann W."/>
            <person name="Wedler H."/>
            <person name="Wambutt R."/>
            <person name="Purnelle B."/>
            <person name="Goffeau A."/>
            <person name="Cadieu E."/>
            <person name="Dreano S."/>
            <person name="Gloux S."/>
            <person name="Lelaure V."/>
            <person name="Mottier S."/>
            <person name="Galibert F."/>
            <person name="Aves S.J."/>
            <person name="Xiang Z."/>
            <person name="Hunt C."/>
            <person name="Moore K."/>
            <person name="Hurst S.M."/>
            <person name="Lucas M."/>
            <person name="Rochet M."/>
            <person name="Gaillardin C."/>
            <person name="Tallada V.A."/>
            <person name="Garzon A."/>
            <person name="Thode G."/>
            <person name="Daga R.R."/>
            <person name="Cruzado L."/>
            <person name="Jimenez J."/>
            <person name="Sanchez M."/>
            <person name="del Rey F."/>
            <person name="Benito J."/>
            <person name="Dominguez A."/>
            <person name="Revuelta J.L."/>
            <person name="Moreno S."/>
            <person name="Armstrong J."/>
            <person name="Forsburg S.L."/>
            <person name="Cerutti L."/>
            <person name="Lowe T."/>
            <person name="McCombie W.R."/>
            <person name="Paulsen I."/>
            <person name="Potashkin J."/>
            <person name="Shpakovski G.V."/>
            <person name="Ussery D."/>
            <person name="Barrell B.G."/>
            <person name="Nurse P."/>
        </authorList>
    </citation>
    <scope>NUCLEOTIDE SEQUENCE [LARGE SCALE GENOMIC DNA]</scope>
    <source>
        <strain>972 / ATCC 24843</strain>
    </source>
</reference>
<reference key="2">
    <citation type="journal article" date="2006" name="Nat. Biotechnol.">
        <title>ORFeome cloning and global analysis of protein localization in the fission yeast Schizosaccharomyces pombe.</title>
        <authorList>
            <person name="Matsuyama A."/>
            <person name="Arai R."/>
            <person name="Yashiroda Y."/>
            <person name="Shirai A."/>
            <person name="Kamata A."/>
            <person name="Sekido S."/>
            <person name="Kobayashi Y."/>
            <person name="Hashimoto A."/>
            <person name="Hamamoto M."/>
            <person name="Hiraoka Y."/>
            <person name="Horinouchi S."/>
            <person name="Yoshida M."/>
        </authorList>
    </citation>
    <scope>SUBCELLULAR LOCATION [LARGE SCALE ANALYSIS]</scope>
</reference>
<organism>
    <name type="scientific">Schizosaccharomyces pombe (strain 972 / ATCC 24843)</name>
    <name type="common">Fission yeast</name>
    <dbReference type="NCBI Taxonomy" id="284812"/>
    <lineage>
        <taxon>Eukaryota</taxon>
        <taxon>Fungi</taxon>
        <taxon>Dikarya</taxon>
        <taxon>Ascomycota</taxon>
        <taxon>Taphrinomycotina</taxon>
        <taxon>Schizosaccharomycetes</taxon>
        <taxon>Schizosaccharomycetales</taxon>
        <taxon>Schizosaccharomycetaceae</taxon>
        <taxon>Schizosaccharomyces</taxon>
    </lineage>
</organism>
<sequence length="637" mass="69080">MDTTNNTYARSISSNGNDNFPTPDWQFNGSQLQQNRKSKMNGRSVTNVFPNAFSDAEFEQISMPELNLKRFNPTTLEENNSDLSDMSSWDYMMNVPIRVYNDADTMDPFSLDTIPDSSMDMPFDPLASDYGNAANFPSVPSSLGSNHQFITTPPVNGSNEPTSAQTNHIITANSSPSGNAGSNASASMSVPPPLTPSASTINDQPFSNSFDLPSQVIADGTGAISDINGNPFPMNSPPLDMEPLPSISMDASDSVSEQLVKDASLPSGPFSTDYLENGSDLKRSLGHNQKSDRVSKDVSPQHQANPSTLNNPLKTQNFDSSKNLYTDNKDSSLVSPTGLQSRMEQNPEVRAHPMKDSATSTALRRSHALGAAADSLLPQENSAQIYDGKDVSMVNDNMHSDVRQDSFNKESIKQRIPSLSPPITRSYNAKHRPSLVLGTSVNPHSLSPSQPPVVVPSNTTISSSPPLTSPVKTSANIPNLLPTSELDSSNAPHSQSAATHDLNDVKSYYNTRSSHSVVPNPTNQKVSITGAAADGPNGSAPVDTTPTNSSTTATGAQRKRRKFKFGKQIGPVRCTLQNRVTGEICNTVFSRTYDLIRHQDTIHAKTRPVFRCEICGDQRHFSRHDALVRHLRVKHGR</sequence>
<evidence type="ECO:0000255" key="1">
    <source>
        <dbReference type="PROSITE-ProRule" id="PRU00042"/>
    </source>
</evidence>
<evidence type="ECO:0000256" key="2">
    <source>
        <dbReference type="SAM" id="MobiDB-lite"/>
    </source>
</evidence>
<evidence type="ECO:0000269" key="3">
    <source>
    </source>
</evidence>